<reference key="1">
    <citation type="submission" date="2008-12" db="EMBL/GenBank/DDBJ databases">
        <title>Complete sequence of chromosome of Shewanella baltica OS223.</title>
        <authorList>
            <consortium name="US DOE Joint Genome Institute"/>
            <person name="Lucas S."/>
            <person name="Copeland A."/>
            <person name="Lapidus A."/>
            <person name="Glavina del Rio T."/>
            <person name="Dalin E."/>
            <person name="Tice H."/>
            <person name="Bruce D."/>
            <person name="Goodwin L."/>
            <person name="Pitluck S."/>
            <person name="Chertkov O."/>
            <person name="Meincke L."/>
            <person name="Brettin T."/>
            <person name="Detter J.C."/>
            <person name="Han C."/>
            <person name="Kuske C.R."/>
            <person name="Larimer F."/>
            <person name="Land M."/>
            <person name="Hauser L."/>
            <person name="Kyrpides N."/>
            <person name="Ovchinnikova G."/>
            <person name="Brettar I."/>
            <person name="Rodrigues J."/>
            <person name="Konstantinidis K."/>
            <person name="Tiedje J."/>
        </authorList>
    </citation>
    <scope>NUCLEOTIDE SEQUENCE [LARGE SCALE GENOMIC DNA]</scope>
    <source>
        <strain>OS223</strain>
    </source>
</reference>
<proteinExistence type="inferred from homology"/>
<keyword id="KW-0963">Cytoplasm</keyword>
<keyword id="KW-0275">Fatty acid biosynthesis</keyword>
<keyword id="KW-0276">Fatty acid metabolism</keyword>
<keyword id="KW-0444">Lipid biosynthesis</keyword>
<keyword id="KW-0443">Lipid metabolism</keyword>
<keyword id="KW-0460">Magnesium</keyword>
<keyword id="KW-0479">Metal-binding</keyword>
<keyword id="KW-0808">Transferase</keyword>
<comment type="function">
    <text evidence="1">Transfers the 4'-phosphopantetheine moiety from coenzyme A to a Ser of acyl-carrier-protein.</text>
</comment>
<comment type="catalytic activity">
    <reaction evidence="1">
        <text>apo-[ACP] + CoA = holo-[ACP] + adenosine 3',5'-bisphosphate + H(+)</text>
        <dbReference type="Rhea" id="RHEA:12068"/>
        <dbReference type="Rhea" id="RHEA-COMP:9685"/>
        <dbReference type="Rhea" id="RHEA-COMP:9690"/>
        <dbReference type="ChEBI" id="CHEBI:15378"/>
        <dbReference type="ChEBI" id="CHEBI:29999"/>
        <dbReference type="ChEBI" id="CHEBI:57287"/>
        <dbReference type="ChEBI" id="CHEBI:58343"/>
        <dbReference type="ChEBI" id="CHEBI:64479"/>
        <dbReference type="EC" id="2.7.8.7"/>
    </reaction>
</comment>
<comment type="cofactor">
    <cofactor evidence="1">
        <name>Mg(2+)</name>
        <dbReference type="ChEBI" id="CHEBI:18420"/>
    </cofactor>
</comment>
<comment type="subcellular location">
    <subcellularLocation>
        <location evidence="1">Cytoplasm</location>
    </subcellularLocation>
</comment>
<comment type="similarity">
    <text evidence="1">Belongs to the P-Pant transferase superfamily. AcpS family.</text>
</comment>
<gene>
    <name evidence="1" type="primary">acpS</name>
    <name type="ordered locus">Sbal223_3108</name>
</gene>
<accession>B8EBP8</accession>
<protein>
    <recommendedName>
        <fullName evidence="1">Holo-[acyl-carrier-protein] synthase</fullName>
        <shortName evidence="1">Holo-ACP synthase</shortName>
        <ecNumber evidence="1">2.7.8.7</ecNumber>
    </recommendedName>
    <alternativeName>
        <fullName evidence="1">4'-phosphopantetheinyl transferase AcpS</fullName>
    </alternativeName>
</protein>
<evidence type="ECO:0000255" key="1">
    <source>
        <dbReference type="HAMAP-Rule" id="MF_00101"/>
    </source>
</evidence>
<name>ACPS_SHEB2</name>
<organism>
    <name type="scientific">Shewanella baltica (strain OS223)</name>
    <dbReference type="NCBI Taxonomy" id="407976"/>
    <lineage>
        <taxon>Bacteria</taxon>
        <taxon>Pseudomonadati</taxon>
        <taxon>Pseudomonadota</taxon>
        <taxon>Gammaproteobacteria</taxon>
        <taxon>Alteromonadales</taxon>
        <taxon>Shewanellaceae</taxon>
        <taxon>Shewanella</taxon>
    </lineage>
</organism>
<dbReference type="EC" id="2.7.8.7" evidence="1"/>
<dbReference type="EMBL" id="CP001252">
    <property type="protein sequence ID" value="ACK47593.1"/>
    <property type="molecule type" value="Genomic_DNA"/>
</dbReference>
<dbReference type="RefSeq" id="WP_012588259.1">
    <property type="nucleotide sequence ID" value="NC_011663.1"/>
</dbReference>
<dbReference type="SMR" id="B8EBP8"/>
<dbReference type="KEGG" id="sbp:Sbal223_3108"/>
<dbReference type="HOGENOM" id="CLU_089696_3_1_6"/>
<dbReference type="Proteomes" id="UP000002507">
    <property type="component" value="Chromosome"/>
</dbReference>
<dbReference type="GO" id="GO:0005737">
    <property type="term" value="C:cytoplasm"/>
    <property type="evidence" value="ECO:0007669"/>
    <property type="project" value="UniProtKB-SubCell"/>
</dbReference>
<dbReference type="GO" id="GO:0008897">
    <property type="term" value="F:holo-[acyl-carrier-protein] synthase activity"/>
    <property type="evidence" value="ECO:0007669"/>
    <property type="project" value="UniProtKB-UniRule"/>
</dbReference>
<dbReference type="GO" id="GO:0000287">
    <property type="term" value="F:magnesium ion binding"/>
    <property type="evidence" value="ECO:0007669"/>
    <property type="project" value="UniProtKB-UniRule"/>
</dbReference>
<dbReference type="GO" id="GO:0006633">
    <property type="term" value="P:fatty acid biosynthetic process"/>
    <property type="evidence" value="ECO:0007669"/>
    <property type="project" value="UniProtKB-UniRule"/>
</dbReference>
<dbReference type="FunFam" id="3.90.470.20:FF:000001">
    <property type="entry name" value="Holo-[acyl-carrier-protein] synthase"/>
    <property type="match status" value="1"/>
</dbReference>
<dbReference type="Gene3D" id="3.90.470.20">
    <property type="entry name" value="4'-phosphopantetheinyl transferase domain"/>
    <property type="match status" value="1"/>
</dbReference>
<dbReference type="HAMAP" id="MF_00101">
    <property type="entry name" value="AcpS"/>
    <property type="match status" value="1"/>
</dbReference>
<dbReference type="InterPro" id="IPR008278">
    <property type="entry name" value="4-PPantetheinyl_Trfase_dom"/>
</dbReference>
<dbReference type="InterPro" id="IPR037143">
    <property type="entry name" value="4-PPantetheinyl_Trfase_dom_sf"/>
</dbReference>
<dbReference type="InterPro" id="IPR002582">
    <property type="entry name" value="ACPS"/>
</dbReference>
<dbReference type="InterPro" id="IPR004568">
    <property type="entry name" value="Ppantetheine-prot_Trfase_dom"/>
</dbReference>
<dbReference type="NCBIfam" id="TIGR00516">
    <property type="entry name" value="acpS"/>
    <property type="match status" value="1"/>
</dbReference>
<dbReference type="NCBIfam" id="TIGR00556">
    <property type="entry name" value="pantethn_trn"/>
    <property type="match status" value="1"/>
</dbReference>
<dbReference type="Pfam" id="PF01648">
    <property type="entry name" value="ACPS"/>
    <property type="match status" value="1"/>
</dbReference>
<dbReference type="SUPFAM" id="SSF56214">
    <property type="entry name" value="4'-phosphopantetheinyl transferase"/>
    <property type="match status" value="1"/>
</dbReference>
<feature type="chain" id="PRO_1000118824" description="Holo-[acyl-carrier-protein] synthase">
    <location>
        <begin position="1"/>
        <end position="127"/>
    </location>
</feature>
<feature type="binding site" evidence="1">
    <location>
        <position position="9"/>
    </location>
    <ligand>
        <name>Mg(2+)</name>
        <dbReference type="ChEBI" id="CHEBI:18420"/>
    </ligand>
</feature>
<feature type="binding site" evidence="1">
    <location>
        <position position="58"/>
    </location>
    <ligand>
        <name>Mg(2+)</name>
        <dbReference type="ChEBI" id="CHEBI:18420"/>
    </ligand>
</feature>
<sequence length="127" mass="13512">MAIVGLGTDIVEIERIQAHVARAGDKLAKRVLTEAELAIYTGHSQPSRYLAKRFAAKEAAAKALGTGIGRGVSFQHIHIGNNEDGAPTIHFTEGALARLQQLKATVGHISIADEKSYAIATVIIESQ</sequence>